<feature type="chain" id="PRO_1000124918" description="GTP cyclohydrolase 1">
    <location>
        <begin position="1"/>
        <end position="222"/>
    </location>
</feature>
<feature type="binding site" evidence="1">
    <location>
        <position position="111"/>
    </location>
    <ligand>
        <name>Zn(2+)</name>
        <dbReference type="ChEBI" id="CHEBI:29105"/>
    </ligand>
</feature>
<feature type="binding site" evidence="1">
    <location>
        <position position="114"/>
    </location>
    <ligand>
        <name>Zn(2+)</name>
        <dbReference type="ChEBI" id="CHEBI:29105"/>
    </ligand>
</feature>
<feature type="binding site" evidence="1">
    <location>
        <position position="182"/>
    </location>
    <ligand>
        <name>Zn(2+)</name>
        <dbReference type="ChEBI" id="CHEBI:29105"/>
    </ligand>
</feature>
<evidence type="ECO:0000255" key="1">
    <source>
        <dbReference type="HAMAP-Rule" id="MF_00223"/>
    </source>
</evidence>
<reference key="1">
    <citation type="journal article" date="2009" name="PLoS Genet.">
        <title>Organised genome dynamics in the Escherichia coli species results in highly diverse adaptive paths.</title>
        <authorList>
            <person name="Touchon M."/>
            <person name="Hoede C."/>
            <person name="Tenaillon O."/>
            <person name="Barbe V."/>
            <person name="Baeriswyl S."/>
            <person name="Bidet P."/>
            <person name="Bingen E."/>
            <person name="Bonacorsi S."/>
            <person name="Bouchier C."/>
            <person name="Bouvet O."/>
            <person name="Calteau A."/>
            <person name="Chiapello H."/>
            <person name="Clermont O."/>
            <person name="Cruveiller S."/>
            <person name="Danchin A."/>
            <person name="Diard M."/>
            <person name="Dossat C."/>
            <person name="Karoui M.E."/>
            <person name="Frapy E."/>
            <person name="Garry L."/>
            <person name="Ghigo J.M."/>
            <person name="Gilles A.M."/>
            <person name="Johnson J."/>
            <person name="Le Bouguenec C."/>
            <person name="Lescat M."/>
            <person name="Mangenot S."/>
            <person name="Martinez-Jehanne V."/>
            <person name="Matic I."/>
            <person name="Nassif X."/>
            <person name="Oztas S."/>
            <person name="Petit M.A."/>
            <person name="Pichon C."/>
            <person name="Rouy Z."/>
            <person name="Ruf C.S."/>
            <person name="Schneider D."/>
            <person name="Tourret J."/>
            <person name="Vacherie B."/>
            <person name="Vallenet D."/>
            <person name="Medigue C."/>
            <person name="Rocha E.P.C."/>
            <person name="Denamur E."/>
        </authorList>
    </citation>
    <scope>NUCLEOTIDE SEQUENCE [LARGE SCALE GENOMIC DNA]</scope>
    <source>
        <strain>55989 / EAEC</strain>
    </source>
</reference>
<sequence length="222" mass="24831">MPSLSKEAALVHEALVARGLETPLRPPVHEMDNETRKSLIAGHMTEIMQLLNLDLADDSLMETPHRIAKMYVDEIFSGLDYANFPKITLIENKMKVDEMVTVRDITLTSTCEHHFVTIDGKATVAYIPKDSVIGLSKINRIVQFFAQRPQVQERLTQQILIALQTLLGTNNVAVSIDAVHYCVKARGIRDATSATTTTSLGGLFKSSQNTRHEFLRAVRHHN</sequence>
<proteinExistence type="inferred from homology"/>
<protein>
    <recommendedName>
        <fullName evidence="1">GTP cyclohydrolase 1</fullName>
        <ecNumber evidence="1">3.5.4.16</ecNumber>
    </recommendedName>
    <alternativeName>
        <fullName evidence="1">GTP cyclohydrolase I</fullName>
        <shortName evidence="1">GTP-CH-I</shortName>
    </alternativeName>
</protein>
<gene>
    <name evidence="1" type="primary">folE</name>
    <name type="ordered locus">EC55989_2404</name>
</gene>
<organism>
    <name type="scientific">Escherichia coli (strain 55989 / EAEC)</name>
    <dbReference type="NCBI Taxonomy" id="585055"/>
    <lineage>
        <taxon>Bacteria</taxon>
        <taxon>Pseudomonadati</taxon>
        <taxon>Pseudomonadota</taxon>
        <taxon>Gammaproteobacteria</taxon>
        <taxon>Enterobacterales</taxon>
        <taxon>Enterobacteriaceae</taxon>
        <taxon>Escherichia</taxon>
    </lineage>
</organism>
<accession>B7LAH4</accession>
<name>GCH1_ECO55</name>
<dbReference type="EC" id="3.5.4.16" evidence="1"/>
<dbReference type="EMBL" id="CU928145">
    <property type="protein sequence ID" value="CAU98274.1"/>
    <property type="molecule type" value="Genomic_DNA"/>
</dbReference>
<dbReference type="RefSeq" id="WP_001139613.1">
    <property type="nucleotide sequence ID" value="NZ_CP028304.1"/>
</dbReference>
<dbReference type="SMR" id="B7LAH4"/>
<dbReference type="GeneID" id="93775029"/>
<dbReference type="KEGG" id="eck:EC55989_2404"/>
<dbReference type="HOGENOM" id="CLU_049768_3_2_6"/>
<dbReference type="UniPathway" id="UPA00848">
    <property type="reaction ID" value="UER00151"/>
</dbReference>
<dbReference type="Proteomes" id="UP000000746">
    <property type="component" value="Chromosome"/>
</dbReference>
<dbReference type="GO" id="GO:0005737">
    <property type="term" value="C:cytoplasm"/>
    <property type="evidence" value="ECO:0007669"/>
    <property type="project" value="TreeGrafter"/>
</dbReference>
<dbReference type="GO" id="GO:0005525">
    <property type="term" value="F:GTP binding"/>
    <property type="evidence" value="ECO:0007669"/>
    <property type="project" value="UniProtKB-KW"/>
</dbReference>
<dbReference type="GO" id="GO:0003934">
    <property type="term" value="F:GTP cyclohydrolase I activity"/>
    <property type="evidence" value="ECO:0007669"/>
    <property type="project" value="UniProtKB-UniRule"/>
</dbReference>
<dbReference type="GO" id="GO:0008270">
    <property type="term" value="F:zinc ion binding"/>
    <property type="evidence" value="ECO:0007669"/>
    <property type="project" value="UniProtKB-UniRule"/>
</dbReference>
<dbReference type="GO" id="GO:0006730">
    <property type="term" value="P:one-carbon metabolic process"/>
    <property type="evidence" value="ECO:0007669"/>
    <property type="project" value="UniProtKB-UniRule"/>
</dbReference>
<dbReference type="GO" id="GO:0006729">
    <property type="term" value="P:tetrahydrobiopterin biosynthetic process"/>
    <property type="evidence" value="ECO:0007669"/>
    <property type="project" value="TreeGrafter"/>
</dbReference>
<dbReference type="GO" id="GO:0046654">
    <property type="term" value="P:tetrahydrofolate biosynthetic process"/>
    <property type="evidence" value="ECO:0007669"/>
    <property type="project" value="UniProtKB-UniRule"/>
</dbReference>
<dbReference type="CDD" id="cd00642">
    <property type="entry name" value="GTP_cyclohydro1"/>
    <property type="match status" value="1"/>
</dbReference>
<dbReference type="FunFam" id="1.10.286.10:FF:000002">
    <property type="entry name" value="GTP cyclohydrolase 1"/>
    <property type="match status" value="1"/>
</dbReference>
<dbReference type="FunFam" id="3.30.1130.10:FF:000001">
    <property type="entry name" value="GTP cyclohydrolase 1"/>
    <property type="match status" value="1"/>
</dbReference>
<dbReference type="Gene3D" id="1.10.286.10">
    <property type="match status" value="1"/>
</dbReference>
<dbReference type="Gene3D" id="3.30.1130.10">
    <property type="match status" value="1"/>
</dbReference>
<dbReference type="HAMAP" id="MF_00223">
    <property type="entry name" value="FolE"/>
    <property type="match status" value="1"/>
</dbReference>
<dbReference type="InterPro" id="IPR043133">
    <property type="entry name" value="GTP-CH-I_C/QueF"/>
</dbReference>
<dbReference type="InterPro" id="IPR043134">
    <property type="entry name" value="GTP-CH-I_N"/>
</dbReference>
<dbReference type="InterPro" id="IPR001474">
    <property type="entry name" value="GTP_CycHdrlase_I"/>
</dbReference>
<dbReference type="InterPro" id="IPR018234">
    <property type="entry name" value="GTP_CycHdrlase_I_CS"/>
</dbReference>
<dbReference type="InterPro" id="IPR020602">
    <property type="entry name" value="GTP_CycHdrlase_I_dom"/>
</dbReference>
<dbReference type="NCBIfam" id="TIGR00063">
    <property type="entry name" value="folE"/>
    <property type="match status" value="1"/>
</dbReference>
<dbReference type="NCBIfam" id="NF006824">
    <property type="entry name" value="PRK09347.1-1"/>
    <property type="match status" value="1"/>
</dbReference>
<dbReference type="NCBIfam" id="NF006826">
    <property type="entry name" value="PRK09347.1-3"/>
    <property type="match status" value="1"/>
</dbReference>
<dbReference type="PANTHER" id="PTHR11109:SF7">
    <property type="entry name" value="GTP CYCLOHYDROLASE 1"/>
    <property type="match status" value="1"/>
</dbReference>
<dbReference type="PANTHER" id="PTHR11109">
    <property type="entry name" value="GTP CYCLOHYDROLASE I"/>
    <property type="match status" value="1"/>
</dbReference>
<dbReference type="Pfam" id="PF01227">
    <property type="entry name" value="GTP_cyclohydroI"/>
    <property type="match status" value="1"/>
</dbReference>
<dbReference type="SUPFAM" id="SSF55620">
    <property type="entry name" value="Tetrahydrobiopterin biosynthesis enzymes-like"/>
    <property type="match status" value="1"/>
</dbReference>
<dbReference type="PROSITE" id="PS00859">
    <property type="entry name" value="GTP_CYCLOHYDROL_1_1"/>
    <property type="match status" value="1"/>
</dbReference>
<dbReference type="PROSITE" id="PS00860">
    <property type="entry name" value="GTP_CYCLOHYDROL_1_2"/>
    <property type="match status" value="1"/>
</dbReference>
<comment type="catalytic activity">
    <reaction evidence="1">
        <text>GTP + H2O = 7,8-dihydroneopterin 3'-triphosphate + formate + H(+)</text>
        <dbReference type="Rhea" id="RHEA:17473"/>
        <dbReference type="ChEBI" id="CHEBI:15377"/>
        <dbReference type="ChEBI" id="CHEBI:15378"/>
        <dbReference type="ChEBI" id="CHEBI:15740"/>
        <dbReference type="ChEBI" id="CHEBI:37565"/>
        <dbReference type="ChEBI" id="CHEBI:58462"/>
        <dbReference type="EC" id="3.5.4.16"/>
    </reaction>
</comment>
<comment type="pathway">
    <text evidence="1">Cofactor biosynthesis; 7,8-dihydroneopterin triphosphate biosynthesis; 7,8-dihydroneopterin triphosphate from GTP: step 1/1.</text>
</comment>
<comment type="subunit">
    <text evidence="1">Homomer.</text>
</comment>
<comment type="similarity">
    <text evidence="1">Belongs to the GTP cyclohydrolase I family.</text>
</comment>
<keyword id="KW-0342">GTP-binding</keyword>
<keyword id="KW-0378">Hydrolase</keyword>
<keyword id="KW-0479">Metal-binding</keyword>
<keyword id="KW-0547">Nucleotide-binding</keyword>
<keyword id="KW-0554">One-carbon metabolism</keyword>
<keyword id="KW-1185">Reference proteome</keyword>
<keyword id="KW-0862">Zinc</keyword>